<dbReference type="EMBL" id="CP001120">
    <property type="protein sequence ID" value="ACF69248.1"/>
    <property type="molecule type" value="Genomic_DNA"/>
</dbReference>
<dbReference type="RefSeq" id="WP_000609650.1">
    <property type="nucleotide sequence ID" value="NC_011083.1"/>
</dbReference>
<dbReference type="SMR" id="B4TF88"/>
<dbReference type="KEGG" id="seh:SeHA_C4758"/>
<dbReference type="HOGENOM" id="CLU_168367_0_0_6"/>
<dbReference type="Proteomes" id="UP000001866">
    <property type="component" value="Chromosome"/>
</dbReference>
<dbReference type="GO" id="GO:0045283">
    <property type="term" value="C:fumarate reductase complex"/>
    <property type="evidence" value="ECO:0007669"/>
    <property type="project" value="UniProtKB-UniRule"/>
</dbReference>
<dbReference type="GO" id="GO:0005886">
    <property type="term" value="C:plasma membrane"/>
    <property type="evidence" value="ECO:0007669"/>
    <property type="project" value="UniProtKB-SubCell"/>
</dbReference>
<dbReference type="GO" id="GO:0000104">
    <property type="term" value="F:succinate dehydrogenase activity"/>
    <property type="evidence" value="ECO:0007669"/>
    <property type="project" value="UniProtKB-UniRule"/>
</dbReference>
<dbReference type="GO" id="GO:0006106">
    <property type="term" value="P:fumarate metabolic process"/>
    <property type="evidence" value="ECO:0007669"/>
    <property type="project" value="InterPro"/>
</dbReference>
<dbReference type="CDD" id="cd00547">
    <property type="entry name" value="QFR_TypeD_subunitD"/>
    <property type="match status" value="1"/>
</dbReference>
<dbReference type="FunFam" id="1.20.1300.10:FF:000002">
    <property type="entry name" value="Fumarate reductase subunit D"/>
    <property type="match status" value="1"/>
</dbReference>
<dbReference type="Gene3D" id="1.20.1300.10">
    <property type="entry name" value="Fumarate reductase/succinate dehydrogenase, transmembrane subunit"/>
    <property type="match status" value="1"/>
</dbReference>
<dbReference type="HAMAP" id="MF_00709">
    <property type="entry name" value="Fumarate_red_D"/>
    <property type="match status" value="1"/>
</dbReference>
<dbReference type="InterPro" id="IPR003418">
    <property type="entry name" value="Fumarate_red_D"/>
</dbReference>
<dbReference type="InterPro" id="IPR034804">
    <property type="entry name" value="SQR/QFR_C/D"/>
</dbReference>
<dbReference type="NCBIfam" id="NF003977">
    <property type="entry name" value="PRK05470.1-1"/>
    <property type="match status" value="1"/>
</dbReference>
<dbReference type="Pfam" id="PF02313">
    <property type="entry name" value="Fumarate_red_D"/>
    <property type="match status" value="1"/>
</dbReference>
<dbReference type="PIRSF" id="PIRSF000179">
    <property type="entry name" value="FrdD"/>
    <property type="match status" value="1"/>
</dbReference>
<dbReference type="SUPFAM" id="SSF81343">
    <property type="entry name" value="Fumarate reductase respiratory complex transmembrane subunits"/>
    <property type="match status" value="1"/>
</dbReference>
<gene>
    <name evidence="1" type="primary">frdD</name>
    <name type="ordered locus">SeHA_C4758</name>
</gene>
<comment type="function">
    <text evidence="1">Two distinct, membrane-bound, FAD-containing enzymes are responsible for the catalysis of fumarate and succinate interconversion; fumarate reductase is used in anaerobic growth, and succinate dehydrogenase is used in aerobic growth. Anchors the catalytic components of the fumarate reductase complex to the cell inner membrane, binds quinones.</text>
</comment>
<comment type="subunit">
    <text evidence="1">Part of an enzyme complex containing four subunits: a flavoprotein (FrdA), an iron-sulfur protein (FrdB), and two hydrophobic anchor proteins (FrdC and FrdD).</text>
</comment>
<comment type="subcellular location">
    <subcellularLocation>
        <location evidence="1">Cell inner membrane</location>
        <topology evidence="1">Multi-pass membrane protein</topology>
    </subcellularLocation>
</comment>
<comment type="similarity">
    <text evidence="1">Belongs to the FrdD family.</text>
</comment>
<evidence type="ECO:0000255" key="1">
    <source>
        <dbReference type="HAMAP-Rule" id="MF_00709"/>
    </source>
</evidence>
<accession>B4TF88</accession>
<keyword id="KW-0997">Cell inner membrane</keyword>
<keyword id="KW-1003">Cell membrane</keyword>
<keyword id="KW-0472">Membrane</keyword>
<keyword id="KW-0812">Transmembrane</keyword>
<keyword id="KW-1133">Transmembrane helix</keyword>
<reference key="1">
    <citation type="journal article" date="2011" name="J. Bacteriol.">
        <title>Comparative genomics of 28 Salmonella enterica isolates: evidence for CRISPR-mediated adaptive sublineage evolution.</title>
        <authorList>
            <person name="Fricke W.F."/>
            <person name="Mammel M.K."/>
            <person name="McDermott P.F."/>
            <person name="Tartera C."/>
            <person name="White D.G."/>
            <person name="Leclerc J.E."/>
            <person name="Ravel J."/>
            <person name="Cebula T.A."/>
        </authorList>
    </citation>
    <scope>NUCLEOTIDE SEQUENCE [LARGE SCALE GENOMIC DNA]</scope>
    <source>
        <strain>SL476</strain>
    </source>
</reference>
<name>FRDD_SALHS</name>
<protein>
    <recommendedName>
        <fullName evidence="1">Fumarate reductase subunit D</fullName>
    </recommendedName>
    <alternativeName>
        <fullName evidence="1">Fumarate reductase 13 kDa hydrophobic protein</fullName>
    </alternativeName>
    <alternativeName>
        <fullName evidence="1">Quinol-fumarate reductase subunit D</fullName>
        <shortName evidence="1">QFR subunit D</shortName>
    </alternativeName>
</protein>
<proteinExistence type="inferred from homology"/>
<organism>
    <name type="scientific">Salmonella heidelberg (strain SL476)</name>
    <dbReference type="NCBI Taxonomy" id="454169"/>
    <lineage>
        <taxon>Bacteria</taxon>
        <taxon>Pseudomonadati</taxon>
        <taxon>Pseudomonadota</taxon>
        <taxon>Gammaproteobacteria</taxon>
        <taxon>Enterobacterales</taxon>
        <taxon>Enterobacteriaceae</taxon>
        <taxon>Salmonella</taxon>
    </lineage>
</organism>
<feature type="chain" id="PRO_1000132412" description="Fumarate reductase subunit D">
    <location>
        <begin position="1"/>
        <end position="119"/>
    </location>
</feature>
<feature type="transmembrane region" description="Helical" evidence="1">
    <location>
        <begin position="25"/>
        <end position="45"/>
    </location>
</feature>
<feature type="transmembrane region" description="Helical" evidence="1">
    <location>
        <begin position="61"/>
        <end position="81"/>
    </location>
</feature>
<feature type="transmembrane region" description="Helical" evidence="1">
    <location>
        <begin position="99"/>
        <end position="119"/>
    </location>
</feature>
<sequence>MINPNPKRSDEPVFWGLFGAGGMWGAIIAPVIVLLVGIMLPLGLFPGDALSFERVLTFAQSFIGRVFLFLMIVLPLWCGLHRMHHAMHDLKIHVPAGKWVFYGLAAILTVVTAIGVITL</sequence>